<gene>
    <name evidence="28 31" type="primary">CD81</name>
    <name evidence="27" type="synonym">TAPA1</name>
    <name type="synonym">TSPAN28</name>
</gene>
<feature type="chain" id="PRO_0000219221" description="CD81 antigen">
    <location>
        <begin position="1"/>
        <end position="236"/>
    </location>
</feature>
<feature type="topological domain" description="Cytoplasmic" evidence="21 30">
    <location>
        <begin position="1"/>
        <end position="12"/>
    </location>
</feature>
<feature type="transmembrane region" description="Helical" evidence="21">
    <location>
        <begin position="13"/>
        <end position="33"/>
    </location>
</feature>
<feature type="topological domain" description="Extracellular" evidence="21">
    <location>
        <begin position="34"/>
        <end position="63"/>
    </location>
</feature>
<feature type="transmembrane region" description="Helical" evidence="21">
    <location>
        <begin position="64"/>
        <end position="84"/>
    </location>
</feature>
<feature type="topological domain" description="Cytoplasmic" evidence="21">
    <location>
        <begin position="85"/>
        <end position="89"/>
    </location>
</feature>
<feature type="transmembrane region" description="Helical" evidence="21">
    <location>
        <begin position="90"/>
        <end position="112"/>
    </location>
</feature>
<feature type="topological domain" description="Extracellular" evidence="21">
    <location>
        <begin position="113"/>
        <end position="201"/>
    </location>
</feature>
<feature type="transmembrane region" description="Helical" evidence="21">
    <location>
        <begin position="202"/>
        <end position="224"/>
    </location>
</feature>
<feature type="topological domain" description="Cytoplasmic" evidence="21 30">
    <location>
        <begin position="225"/>
        <end position="236"/>
    </location>
</feature>
<feature type="binding site" evidence="21 42">
    <location>
        <position position="219"/>
    </location>
    <ligand>
        <name>cholesterol</name>
        <dbReference type="ChEBI" id="CHEBI:16113"/>
    </ligand>
</feature>
<feature type="site" description="Important for interaction with integrin" evidence="23">
    <location>
        <position position="116"/>
    </location>
</feature>
<feature type="site" description="Important for interaction with integrin" evidence="23">
    <location>
        <position position="144"/>
    </location>
</feature>
<feature type="site" description="Important for interaction with integrin" evidence="23">
    <location>
        <position position="148"/>
    </location>
</feature>
<feature type="disulfide bond" evidence="3 4 19 21 22 32 33 34 35 36 37 38 39 40 41 42 43 44 45">
    <location>
        <begin position="156"/>
        <end position="190"/>
    </location>
</feature>
<feature type="disulfide bond" evidence="3 4 19 21 22 32 33 34 35 36 37 38 39 40 41 42 43 44 45">
    <location>
        <begin position="157"/>
        <end position="175"/>
    </location>
</feature>
<feature type="mutagenesis site" description="Reduces binding to integrin." evidence="23">
    <original>K</original>
    <variation>E</variation>
    <location>
        <position position="116"/>
    </location>
</feature>
<feature type="mutagenesis site" description="No effect on integrin binding." evidence="23">
    <original>I</original>
    <variation>A</variation>
    <location>
        <position position="119"/>
    </location>
</feature>
<feature type="mutagenesis site" description="No effect on integrin binding." evidence="23">
    <original>K</original>
    <variation>E</variation>
    <location>
        <position position="121"/>
    </location>
</feature>
<feature type="mutagenesis site" description="No effect on integrin binding." evidence="23">
    <original>K</original>
    <variation>E</variation>
    <location>
        <position position="124"/>
    </location>
</feature>
<feature type="mutagenesis site" description="No effect on integrin binding." evidence="23">
    <original>F</original>
    <variation>A</variation>
    <location>
        <position position="126"/>
    </location>
</feature>
<feature type="mutagenesis site" description="Reduces binding to integrin; when associated with E-148." evidence="23">
    <original>K</original>
    <variation>E</variation>
    <location>
        <position position="144"/>
    </location>
</feature>
<feature type="mutagenesis site" description="Reduces binding to integrin; when associated with E-144." evidence="23">
    <original>K</original>
    <variation>E</variation>
    <location>
        <position position="148"/>
    </location>
</feature>
<feature type="mutagenesis site" description="No effect on integrin binding." evidence="23">
    <original>F</original>
    <variation>A</variation>
    <location>
        <position position="186"/>
    </location>
</feature>
<feature type="mutagenesis site" description="No effect on integrin binding." evidence="23">
    <original>K</original>
    <variation>E</variation>
    <location>
        <position position="187"/>
    </location>
</feature>
<feature type="mutagenesis site" description="Strongly reduced affinity for HCV protein E2; when associated with E-196." evidence="19">
    <original>E</original>
    <variation>K</variation>
    <variation>Q</variation>
    <location>
        <position position="188"/>
    </location>
</feature>
<feature type="mutagenesis site" description="Mildly reduced affinity for HCV protein E2." evidence="19">
    <original>E</original>
    <variation>K</variation>
    <location>
        <position position="188"/>
    </location>
</feature>
<feature type="mutagenesis site" description="Strongly reduced affinity for HCV protein E2; when associated with K-188 or Q-188." evidence="19">
    <original>D</original>
    <variation>E</variation>
    <location>
        <position position="196"/>
    </location>
</feature>
<feature type="mutagenesis site" description="Strongly reduced affinity for HCV protein E2." evidence="19">
    <original>D</original>
    <variation>K</variation>
    <variation>Q</variation>
    <variation>R</variation>
    <location>
        <position position="196"/>
    </location>
</feature>
<feature type="mutagenesis site" description="Reduced affinity for cholesterol binding." evidence="21">
    <original>E</original>
    <variation>A</variation>
    <variation>Q</variation>
    <location>
        <position position="219"/>
    </location>
</feature>
<feature type="helix" evidence="49">
    <location>
        <begin position="10"/>
        <end position="36"/>
    </location>
</feature>
<feature type="helix" evidence="49">
    <location>
        <begin position="57"/>
        <end position="80"/>
    </location>
</feature>
<feature type="helix" evidence="49">
    <location>
        <begin position="81"/>
        <end position="84"/>
    </location>
</feature>
<feature type="helix" evidence="50">
    <location>
        <begin position="113"/>
        <end position="115"/>
    </location>
</feature>
<feature type="helix" evidence="47">
    <location>
        <begin position="116"/>
        <end position="136"/>
    </location>
</feature>
<feature type="helix" evidence="47">
    <location>
        <begin position="141"/>
        <end position="154"/>
    </location>
</feature>
<feature type="strand" evidence="48">
    <location>
        <begin position="158"/>
        <end position="160"/>
    </location>
</feature>
<feature type="helix" evidence="47">
    <location>
        <begin position="163"/>
        <end position="165"/>
    </location>
</feature>
<feature type="helix" evidence="47">
    <location>
        <begin position="166"/>
        <end position="171"/>
    </location>
</feature>
<feature type="helix" evidence="46">
    <location>
        <begin position="172"/>
        <end position="174"/>
    </location>
</feature>
<feature type="helix" evidence="47">
    <location>
        <begin position="181"/>
        <end position="185"/>
    </location>
</feature>
<feature type="helix" evidence="47">
    <location>
        <begin position="190"/>
        <end position="199"/>
    </location>
</feature>
<feature type="helix" evidence="49">
    <location>
        <begin position="202"/>
        <end position="230"/>
    </location>
</feature>
<proteinExistence type="evidence at protein level"/>
<evidence type="ECO:0000250" key="1">
    <source>
        <dbReference type="UniProtKB" id="P35762"/>
    </source>
</evidence>
<evidence type="ECO:0000255" key="2"/>
<evidence type="ECO:0000269" key="3">
    <source>
    </source>
</evidence>
<evidence type="ECO:0000269" key="4">
    <source>
    </source>
</evidence>
<evidence type="ECO:0000269" key="5">
    <source>
    </source>
</evidence>
<evidence type="ECO:0000269" key="6">
    <source>
    </source>
</evidence>
<evidence type="ECO:0000269" key="7">
    <source>
    </source>
</evidence>
<evidence type="ECO:0000269" key="8">
    <source>
    </source>
</evidence>
<evidence type="ECO:0000269" key="9">
    <source>
    </source>
</evidence>
<evidence type="ECO:0000269" key="10">
    <source>
    </source>
</evidence>
<evidence type="ECO:0000269" key="11">
    <source>
    </source>
</evidence>
<evidence type="ECO:0000269" key="12">
    <source>
    </source>
</evidence>
<evidence type="ECO:0000269" key="13">
    <source>
    </source>
</evidence>
<evidence type="ECO:0000269" key="14">
    <source>
    </source>
</evidence>
<evidence type="ECO:0000269" key="15">
    <source>
    </source>
</evidence>
<evidence type="ECO:0000269" key="16">
    <source>
    </source>
</evidence>
<evidence type="ECO:0000269" key="17">
    <source>
    </source>
</evidence>
<evidence type="ECO:0000269" key="18">
    <source>
    </source>
</evidence>
<evidence type="ECO:0000269" key="19">
    <source>
    </source>
</evidence>
<evidence type="ECO:0000269" key="20">
    <source>
    </source>
</evidence>
<evidence type="ECO:0000269" key="21">
    <source>
    </source>
</evidence>
<evidence type="ECO:0000269" key="22">
    <source>
    </source>
</evidence>
<evidence type="ECO:0000269" key="23">
    <source>
    </source>
</evidence>
<evidence type="ECO:0000269" key="24">
    <source>
    </source>
</evidence>
<evidence type="ECO:0000269" key="25">
    <source>
    </source>
</evidence>
<evidence type="ECO:0000269" key="26">
    <source>
    </source>
</evidence>
<evidence type="ECO:0000303" key="27">
    <source>
    </source>
</evidence>
<evidence type="ECO:0000303" key="28">
    <source>
    </source>
</evidence>
<evidence type="ECO:0000305" key="29"/>
<evidence type="ECO:0000305" key="30">
    <source>
    </source>
</evidence>
<evidence type="ECO:0000312" key="31">
    <source>
        <dbReference type="HGNC" id="HGNC:1701"/>
    </source>
</evidence>
<evidence type="ECO:0007744" key="32">
    <source>
        <dbReference type="PDB" id="1G8Q"/>
    </source>
</evidence>
<evidence type="ECO:0007744" key="33">
    <source>
        <dbReference type="PDB" id="1IV5"/>
    </source>
</evidence>
<evidence type="ECO:0007744" key="34">
    <source>
        <dbReference type="PDB" id="3X0E"/>
    </source>
</evidence>
<evidence type="ECO:0007744" key="35">
    <source>
        <dbReference type="PDB" id="5DFV"/>
    </source>
</evidence>
<evidence type="ECO:0007744" key="36">
    <source>
        <dbReference type="PDB" id="5DFW"/>
    </source>
</evidence>
<evidence type="ECO:0007744" key="37">
    <source>
        <dbReference type="PDB" id="5M2C"/>
    </source>
</evidence>
<evidence type="ECO:0007744" key="38">
    <source>
        <dbReference type="PDB" id="5M33"/>
    </source>
</evidence>
<evidence type="ECO:0007744" key="39">
    <source>
        <dbReference type="PDB" id="5M3D"/>
    </source>
</evidence>
<evidence type="ECO:0007744" key="40">
    <source>
        <dbReference type="PDB" id="5M3T"/>
    </source>
</evidence>
<evidence type="ECO:0007744" key="41">
    <source>
        <dbReference type="PDB" id="5M4R"/>
    </source>
</evidence>
<evidence type="ECO:0007744" key="42">
    <source>
        <dbReference type="PDB" id="5TCX"/>
    </source>
</evidence>
<evidence type="ECO:0007744" key="43">
    <source>
        <dbReference type="PDB" id="6EJG"/>
    </source>
</evidence>
<evidence type="ECO:0007744" key="44">
    <source>
        <dbReference type="PDB" id="6EJM"/>
    </source>
</evidence>
<evidence type="ECO:0007744" key="45">
    <source>
        <dbReference type="PDB" id="6EK2"/>
    </source>
</evidence>
<evidence type="ECO:0007829" key="46">
    <source>
        <dbReference type="PDB" id="5M2C"/>
    </source>
</evidence>
<evidence type="ECO:0007829" key="47">
    <source>
        <dbReference type="PDB" id="5M33"/>
    </source>
</evidence>
<evidence type="ECO:0007829" key="48">
    <source>
        <dbReference type="PDB" id="5M3D"/>
    </source>
</evidence>
<evidence type="ECO:0007829" key="49">
    <source>
        <dbReference type="PDB" id="5TCX"/>
    </source>
</evidence>
<evidence type="ECO:0007829" key="50">
    <source>
        <dbReference type="PDB" id="6U9S"/>
    </source>
</evidence>
<accession>P60033</accession>
<accession>P18582</accession>
<accession>Q5U0J6</accession>
<reference key="1">
    <citation type="journal article" date="1990" name="Mol. Cell. Biol.">
        <title>TAPA-1, the target of an antiproliferative antibody, defines a new family of transmembrane proteins.</title>
        <authorList>
            <person name="Oren R."/>
            <person name="Takahashi S."/>
            <person name="Doss C."/>
            <person name="Levy R."/>
            <person name="Levy S."/>
        </authorList>
    </citation>
    <scope>NUCLEOTIDE SEQUENCE [MRNA]</scope>
    <scope>SUBCELLULAR LOCATION</scope>
</reference>
<reference key="2">
    <citation type="submission" date="2004-10" db="EMBL/GenBank/DDBJ databases">
        <title>Cloning of human full-length CDSs in BD Creator(TM) system donor vector.</title>
        <authorList>
            <person name="Kalnine N."/>
            <person name="Chen X."/>
            <person name="Rolfs A."/>
            <person name="Halleck A."/>
            <person name="Hines L."/>
            <person name="Eisenstein S."/>
            <person name="Koundinya M."/>
            <person name="Raphael J."/>
            <person name="Moreira D."/>
            <person name="Kelley T."/>
            <person name="LaBaer J."/>
            <person name="Lin Y."/>
            <person name="Phelan M."/>
            <person name="Farmer A."/>
        </authorList>
    </citation>
    <scope>NUCLEOTIDE SEQUENCE [LARGE SCALE MRNA]</scope>
</reference>
<reference key="3">
    <citation type="submission" date="2006-10" db="EMBL/GenBank/DDBJ databases">
        <authorList>
            <person name="Livingston R.J."/>
            <person name="Shaffer T."/>
            <person name="McFarland I."/>
            <person name="Nguyen C.P."/>
            <person name="Stanaway I.B."/>
            <person name="Rajkumar N."/>
            <person name="Johnson E.J."/>
            <person name="da Ponte S.H."/>
            <person name="Willa H."/>
            <person name="Ahearn M.O."/>
            <person name="Bertucci C."/>
            <person name="Acklestad J."/>
            <person name="Carroll A."/>
            <person name="Swanson J."/>
            <person name="Gildersleeve H.I."/>
            <person name="Nickerson D.A."/>
        </authorList>
    </citation>
    <scope>NUCLEOTIDE SEQUENCE [GENOMIC DNA]</scope>
</reference>
<reference key="4">
    <citation type="journal article" date="2006" name="Nature">
        <title>Human chromosome 11 DNA sequence and analysis including novel gene identification.</title>
        <authorList>
            <person name="Taylor T.D."/>
            <person name="Noguchi H."/>
            <person name="Totoki Y."/>
            <person name="Toyoda A."/>
            <person name="Kuroki Y."/>
            <person name="Dewar K."/>
            <person name="Lloyd C."/>
            <person name="Itoh T."/>
            <person name="Takeda T."/>
            <person name="Kim D.-W."/>
            <person name="She X."/>
            <person name="Barlow K.F."/>
            <person name="Bloom T."/>
            <person name="Bruford E."/>
            <person name="Chang J.L."/>
            <person name="Cuomo C.A."/>
            <person name="Eichler E."/>
            <person name="FitzGerald M.G."/>
            <person name="Jaffe D.B."/>
            <person name="LaButti K."/>
            <person name="Nicol R."/>
            <person name="Park H.-S."/>
            <person name="Seaman C."/>
            <person name="Sougnez C."/>
            <person name="Yang X."/>
            <person name="Zimmer A.R."/>
            <person name="Zody M.C."/>
            <person name="Birren B.W."/>
            <person name="Nusbaum C."/>
            <person name="Fujiyama A."/>
            <person name="Hattori M."/>
            <person name="Rogers J."/>
            <person name="Lander E.S."/>
            <person name="Sakaki Y."/>
        </authorList>
    </citation>
    <scope>NUCLEOTIDE SEQUENCE [LARGE SCALE GENOMIC DNA]</scope>
</reference>
<reference key="5">
    <citation type="journal article" date="2004" name="Genome Res.">
        <title>The status, quality, and expansion of the NIH full-length cDNA project: the Mammalian Gene Collection (MGC).</title>
        <authorList>
            <consortium name="The MGC Project Team"/>
        </authorList>
    </citation>
    <scope>NUCLEOTIDE SEQUENCE [LARGE SCALE MRNA]</scope>
    <source>
        <tissue>Brain</tissue>
    </source>
</reference>
<reference key="6">
    <citation type="journal article" date="1990" name="J. Immunol.">
        <title>TAPA-1, the target of an antiproliferative antibody, is associated on the cell surface with the Leu-13 antigen.</title>
        <authorList>
            <person name="Takahashi S."/>
            <person name="Doss C."/>
            <person name="Levy S."/>
            <person name="Levy R."/>
        </authorList>
    </citation>
    <scope>INTERACTION WITH IFITM1</scope>
    <scope>SUBCELLULAR LOCATION</scope>
</reference>
<reference key="7">
    <citation type="journal article" date="1991" name="J. Biol. Chem.">
        <title>Structure and membrane topology of TAPA-1.</title>
        <authorList>
            <person name="Levy S."/>
            <person name="Nguyen V.Q."/>
            <person name="Andria M.L."/>
            <person name="Takahashi S."/>
        </authorList>
    </citation>
    <scope>TOPOLOGY</scope>
</reference>
<reference key="8">
    <citation type="journal article" date="1992" name="J. Immunol.">
        <title>The CD19/CD21 signal transducing complex of human B lymphocytes includes the target of antiproliferative antibody-1 and Leu-13 molecules.</title>
        <authorList>
            <person name="Bradbury L.E."/>
            <person name="Kansas G.S."/>
            <person name="Levy S."/>
            <person name="Evans R.L."/>
            <person name="Tedder T.F."/>
        </authorList>
    </citation>
    <scope>IDENTIFICATION IN A COMPLEX WITH CR2; CD19 AND IFITM1</scope>
    <scope>SUBCELLULAR LOCATION</scope>
</reference>
<reference key="9">
    <citation type="journal article" date="1993" name="J. Immunol.">
        <title>The TAPA-1 molecule is associated on the surface of B cells with HLA-DR molecules.</title>
        <authorList>
            <person name="Schick M.R."/>
            <person name="Levy S."/>
        </authorList>
    </citation>
    <scope>FUNCTION</scope>
    <scope>INTERACTION WITH IFITM1</scope>
    <scope>INTERACTION WITH HLA-DR</scope>
</reference>
<reference key="10">
    <citation type="journal article" date="1996" name="Eur. J. Immunol.">
        <title>Ligation of TAPA-1 (CD81) or major histocompatibility complex class II in co-cultures of human B and T lymphocytes enhances interleukin-4 synthesis by antigen-specific CD4+ T cells.</title>
        <authorList>
            <person name="Secrist H."/>
            <person name="Levy S."/>
            <person name="DeKruyff R.H."/>
            <person name="Umetsu D.T."/>
        </authorList>
    </citation>
    <scope>FUNCTION</scope>
</reference>
<reference key="11">
    <citation type="journal article" date="2001" name="J. Biol. Chem.">
        <title>EWI-2 is a major CD9 and CD81 partner and member of a novel Ig protein subfamily.</title>
        <authorList>
            <person name="Stipp C.S."/>
            <person name="Kolesnikova T.V."/>
            <person name="Hemler M.E."/>
        </authorList>
    </citation>
    <scope>INTERACTION WITH IGSF8</scope>
</reference>
<reference key="12">
    <citation type="journal article" date="2003" name="J. Biol. Chem.">
        <title>Cell entry of hepatitis C virus requires a set of co-receptors that include the CD81 tetraspanin and the SR-B1 scavenger receptor.</title>
        <authorList>
            <person name="Bartosch B."/>
            <person name="Vitelli A."/>
            <person name="Granier C."/>
            <person name="Goujon C."/>
            <person name="Dubuisson J."/>
            <person name="Pascale S."/>
            <person name="Scarselli E."/>
            <person name="Cortese R."/>
            <person name="Nicosia A."/>
            <person name="Cosset F.-L."/>
        </authorList>
    </citation>
    <scope>INTERACTION WITH HCV E1/E2 ENVELOPE HETERODIMER (MICROBIAL INFECTION)</scope>
</reference>
<reference key="13">
    <citation type="journal article" date="2003" name="J. Cell Biol.">
        <title>Tetraspanins CD9 and CD81 function to prevent the fusion of mononuclear phagocytes.</title>
        <authorList>
            <person name="Takeda Y."/>
            <person name="Tachibana I."/>
            <person name="Miyado K."/>
            <person name="Kobayashi M."/>
            <person name="Miyazaki T."/>
            <person name="Funakoshi T."/>
            <person name="Kimura H."/>
            <person name="Yamane H."/>
            <person name="Saito Y."/>
            <person name="Goto H."/>
            <person name="Yoneda T."/>
            <person name="Yoshida M."/>
            <person name="Kumagai T."/>
            <person name="Osaki T."/>
            <person name="Hayashi S."/>
            <person name="Kawase I."/>
            <person name="Mekada E."/>
        </authorList>
    </citation>
    <scope>FUNCTION</scope>
    <scope>TISSUE SPECIFICITY</scope>
    <scope>INTERACTION WITH CD9</scope>
</reference>
<reference key="14">
    <citation type="journal article" date="2003" name="J. Virol.">
        <title>CD81-dependent binding of hepatitis C virus E1E2 heterodimers.</title>
        <authorList>
            <person name="Cocquerel L."/>
            <person name="Kuo C.-C."/>
            <person name="Dubuisson J."/>
            <person name="Levy S."/>
        </authorList>
    </citation>
    <scope>INTERACTION WITH HCV E1/E2 ENVELOPE HETERODIMER (MICROBIAL INFECTION)</scope>
</reference>
<reference key="15">
    <citation type="journal article" date="2003" name="Nat. Med.">
        <title>Hepatocyte CD81 is required for Plasmodium falciparum and Plasmodium yoelii sporozoite infectivity.</title>
        <authorList>
            <person name="Silvie O."/>
            <person name="Rubinstein E."/>
            <person name="Franetich J.F."/>
            <person name="Prenant M."/>
            <person name="Belnoue E."/>
            <person name="Renia L."/>
            <person name="Hannoun L."/>
            <person name="Eling W."/>
            <person name="Levy S."/>
            <person name="Boucheix C."/>
            <person name="Mazier D."/>
        </authorList>
    </citation>
    <scope>FUNCTION (MICROBIAL INFECTION)</scope>
    <scope>TISSUE SPECIFICITY</scope>
</reference>
<reference key="16">
    <citation type="journal article" date="2004" name="J. Biol. Chem.">
        <title>B cell signaling is regulated by induced palmitoylation of CD81.</title>
        <authorList>
            <person name="Cherukuri A."/>
            <person name="Carter R.H."/>
            <person name="Brooks S."/>
            <person name="Bornmann W."/>
            <person name="Finn R."/>
            <person name="Dowd C.S."/>
            <person name="Pierce S.K."/>
        </authorList>
    </citation>
    <scope>PTM</scope>
    <scope>FUNCTION</scope>
</reference>
<reference key="17">
    <citation type="journal article" date="2004" name="Mol. Biol. Cell">
        <title>Dynamic regulation of a GPCR-tetraspanin-G protein complex on intact cells: central role of CD81 in facilitating GPR56-Galpha q/11 association.</title>
        <authorList>
            <person name="Little K.D."/>
            <person name="Hemler M.E."/>
            <person name="Stipp C.S."/>
        </authorList>
    </citation>
    <scope>INTERACTION WITH ADGRG1 AND GNA11</scope>
</reference>
<reference key="18">
    <citation type="journal article" date="2006" name="Mol. Cell. Biol.">
        <title>Building of the tetraspanin web: distinct structural domains of CD81 function in different cellular compartments.</title>
        <authorList>
            <person name="Shoham T."/>
            <person name="Rajapaksa R."/>
            <person name="Kuo C.C."/>
            <person name="Haimovich J."/>
            <person name="Levy S."/>
        </authorList>
    </citation>
    <scope>FUNCTION</scope>
    <scope>INTERACTION WITH CD19</scope>
</reference>
<reference key="19">
    <citation type="journal article" date="2010" name="J. Biol. Chem.">
        <title>Claudin association with CD81 defines hepatitis C virus entry.</title>
        <authorList>
            <person name="Harris H.J."/>
            <person name="Davis C."/>
            <person name="Mullins J.G."/>
            <person name="Hu K."/>
            <person name="Goodall M."/>
            <person name="Farquhar M.J."/>
            <person name="Mee C.J."/>
            <person name="McCaffrey K."/>
            <person name="Young S."/>
            <person name="Drummer H."/>
            <person name="Balfe P."/>
            <person name="McKeating J.A."/>
        </authorList>
    </citation>
    <scope>FUNCTION (MICROBIAL INFECTION)</scope>
    <scope>SUBUNIT</scope>
    <scope>SUBCELLULAR LOCATION</scope>
    <scope>INTERACTION WITH CLDN1; CLDN6 AND CLDN9</scope>
</reference>
<reference key="20">
    <citation type="journal article" date="2010" name="J. Clin. Invest.">
        <title>CD81 gene defect in humans disrupts CD19 complex formation and leads to antibody deficiency.</title>
        <authorList>
            <person name="van Zelm M.C."/>
            <person name="Smet J."/>
            <person name="Adams B."/>
            <person name="Mascart F."/>
            <person name="Schandene L."/>
            <person name="Janssen F."/>
            <person name="Ferster A."/>
            <person name="Kuo C.-C."/>
            <person name="Levy S."/>
            <person name="van Dongen J.J.M."/>
            <person name="van der Burg M."/>
        </authorList>
    </citation>
    <scope>INVOLVEMENT IN CVID6</scope>
    <scope>FUNCTION</scope>
    <scope>SUBCELLULAR LOCATION</scope>
    <scope>TISSUE SPECIFICITY</scope>
</reference>
<reference key="21">
    <citation type="journal article" date="2011" name="BMC Syst. Biol.">
        <title>Initial characterization of the human central proteome.</title>
        <authorList>
            <person name="Burkard T.R."/>
            <person name="Planyavsky M."/>
            <person name="Kaupe I."/>
            <person name="Breitwieser F.P."/>
            <person name="Buerckstuemmer T."/>
            <person name="Bennett K.L."/>
            <person name="Superti-Furga G."/>
            <person name="Colinge J."/>
        </authorList>
    </citation>
    <scope>IDENTIFICATION BY MASS SPECTROMETRY [LARGE SCALE ANALYSIS]</scope>
</reference>
<reference key="22">
    <citation type="journal article" date="2011" name="Mol. Cell. Biol.">
        <title>SCIMP, a transmembrane adapter protein involved in major histocompatibility complex class II signaling.</title>
        <authorList>
            <person name="Draber P."/>
            <person name="Vonkova I."/>
            <person name="Stepanek O."/>
            <person name="Hrdinka M."/>
            <person name="Kucova M."/>
            <person name="Skopcova T."/>
            <person name="Otahal P."/>
            <person name="Angelisova P."/>
            <person name="Horejsi V."/>
            <person name="Yeung M."/>
            <person name="Weiss A."/>
            <person name="Brdicka T."/>
        </authorList>
    </citation>
    <scope>INTERACTION WITH CD53 AND SCIMP</scope>
</reference>
<reference key="23">
    <citation type="journal article" date="2011" name="Nat. Med.">
        <title>EGFR and EphA2 are host factors for hepatitis C virus entry and possible targets for antiviral therapy.</title>
        <authorList>
            <person name="Lupberger J."/>
            <person name="Zeisel M.B."/>
            <person name="Xiao F."/>
            <person name="Thumann C."/>
            <person name="Fofana I."/>
            <person name="Zona L."/>
            <person name="Davis C."/>
            <person name="Mee C.J."/>
            <person name="Turek M."/>
            <person name="Gorke S."/>
            <person name="Royer C."/>
            <person name="Fischer B."/>
            <person name="Zahid M.N."/>
            <person name="Lavillette D."/>
            <person name="Fresquet J."/>
            <person name="Cosset F.L."/>
            <person name="Rothenberg S.M."/>
            <person name="Pietschmann T."/>
            <person name="Patel A.H."/>
            <person name="Pessaux P."/>
            <person name="Doffoel M."/>
            <person name="Raffelsberger W."/>
            <person name="Poch O."/>
            <person name="McKeating J.A."/>
            <person name="Brino L."/>
            <person name="Baumert T.F."/>
        </authorList>
    </citation>
    <scope>FUNCTION (MICROBIAL INFECTION)</scope>
    <scope>INTERACTION WITH CLDN1</scope>
</reference>
<reference key="24">
    <citation type="journal article" date="2012" name="Proc. Natl. Acad. Sci. U.S.A.">
        <title>Complementary costimulation of human T-cell subpopulations by cluster of differentiation 28 (CD28) and CD81.</title>
        <authorList>
            <person name="Sagi Y."/>
            <person name="Landrigan A."/>
            <person name="Levy R."/>
            <person name="Levy S."/>
        </authorList>
    </citation>
    <scope>FUNCTION</scope>
    <scope>TISSUE SPECIFICITY</scope>
    <scope>SUBCELLULAR LOCATION</scope>
</reference>
<reference key="25">
    <citation type="journal article" date="2013" name="Mol. Cell. Biol.">
        <title>CD81 controls sustained T cell activation signaling and defines the maturation stages of cognate immunological synapses.</title>
        <authorList>
            <person name="Rocha-Perugini V."/>
            <person name="Zamai M."/>
            <person name="Gonzalez-Granado J.M."/>
            <person name="Barreiro O."/>
            <person name="Tejera E."/>
            <person name="Yanez-Mo M."/>
            <person name="Caiolfa V.R."/>
            <person name="Sanchez-Madrid F."/>
        </authorList>
    </citation>
    <scope>FUNCTION</scope>
    <scope>INTERACTION WITH CD247</scope>
    <scope>INTERACTION WITH ICAM1</scope>
    <scope>INTERACTION WITH CD9</scope>
</reference>
<reference key="26">
    <citation type="journal article" date="2015" name="J. Biol. Chem.">
        <title>The Interferon-induced Transmembrane Proteins, IFITM1, IFITM2, and IFITM3 Inhibit Hepatitis C Virus Entry.</title>
        <authorList>
            <person name="Narayana S.K."/>
            <person name="Helbig K.J."/>
            <person name="McCartney E.M."/>
            <person name="Eyre N.S."/>
            <person name="Bull R.A."/>
            <person name="Eltahla A."/>
            <person name="Lloyd A.R."/>
            <person name="Beard M.R."/>
        </authorList>
    </citation>
    <scope>FUNCTION</scope>
    <scope>INTERACTION WITH IFITM1</scope>
    <scope>SUBCELLULAR LOCATION</scope>
</reference>
<reference key="27">
    <citation type="journal article" date="2017" name="Biochem. J.">
        <title>The CD9, CD81, and CD151 EC2 domains bind to the classical RGD-binding site of integrin alphavbeta3.</title>
        <authorList>
            <person name="Yu J."/>
            <person name="Lee C.Y."/>
            <person name="Changou C.A."/>
            <person name="Cedano-Prieto D.M."/>
            <person name="Takada Y.K."/>
            <person name="Takada Y."/>
        </authorList>
    </citation>
    <scope>INTERACTION WITH INTEGRIN ITGAV:ITGB3</scope>
    <scope>MUTAGENESIS OF LYS-116; ILE-119; LYS-121; LYS-124; PHE-126; LYS-144; LYS-148; PHE-186 AND LYS-187</scope>
</reference>
<reference key="28">
    <citation type="journal article" date="2017" name="Nat. Microbiol.">
        <title>CD81 association with SAMHD1 enhances HIV-1 reverse transcription by increasing dNTP levels.</title>
        <authorList>
            <person name="Rocha-Perugini V."/>
            <person name="Suarez H."/>
            <person name="Alvarez S."/>
            <person name="Lopez-Martin S."/>
            <person name="Lenzi G.M."/>
            <person name="Vences-Catalan F."/>
            <person name="Levy S."/>
            <person name="Kim B."/>
            <person name="Munoz-Fernandez M.A."/>
            <person name="Sanchez-Madrid F."/>
            <person name="Yanez-Mo M."/>
        </authorList>
    </citation>
    <scope>FUNCTION</scope>
    <scope>FUNCTION (MICROBIAL INFECTION)</scope>
    <scope>INTERACTION WITH SAMHD1</scope>
</reference>
<reference evidence="32" key="29">
    <citation type="journal article" date="2001" name="EMBO J.">
        <title>CD81 extracellular domain 3D structure: insight into the tetraspanin superfamily structural motifs.</title>
        <authorList>
            <person name="Kitadokoro K."/>
            <person name="Bordo D."/>
            <person name="Galli G."/>
            <person name="Petracca R."/>
            <person name="Falugi F."/>
            <person name="Abrignani S."/>
            <person name="Grandi G."/>
            <person name="Bolognesi M."/>
        </authorList>
    </citation>
    <scope>X-RAY CRYSTALLOGRAPHY (1.6 ANGSTROMS) OF 113-202</scope>
</reference>
<reference evidence="33" key="30">
    <citation type="journal article" date="2002" name="Biol. Chem.">
        <title>Subunit association and conformational flexibility in the head subdomain of human CD81 large extracellular loop.</title>
        <authorList>
            <person name="Kitadokoro K."/>
            <person name="Ponassi M."/>
            <person name="Galli G."/>
            <person name="Petracca R."/>
            <person name="Falugi F."/>
            <person name="Grandi G."/>
            <person name="Bolognesi M."/>
        </authorList>
    </citation>
    <scope>X-RAY CRYSTALLOGRAPHY (2.6 ANGSTROMS) OF 113-201</scope>
</reference>
<reference evidence="34" key="31">
    <citation type="journal article" date="2015" name="FASEB J.">
        <title>An intramolecular bond at cluster of differentiation 81 ectodomain is important for hepatitis C virus entry.</title>
        <authorList>
            <person name="Yang W."/>
            <person name="Zhang M."/>
            <person name="Chi X."/>
            <person name="Liu X."/>
            <person name="Qin B."/>
            <person name="Cui S."/>
        </authorList>
    </citation>
    <scope>X-RAY CRYSTALLOGRAPHY (1.84 ANGSTROMS) OF 113-202</scope>
    <scope>FUNCTION (MICROBIAL INFECTION)</scope>
    <scope>INTERACTION WITH HCV ENVELOPE PROTEIN E2 (MICROBIAL INFECTION)</scope>
    <scope>DISULFIDE BONDS</scope>
    <scope>MUTAGENESIS OF GLU-188 AND ASP-196</scope>
</reference>
<reference evidence="42" key="32">
    <citation type="journal article" date="2016" name="Cell">
        <title>Crystal Structure of a Full-Length Human Tetraspanin Reveals a Cholesterol-Binding Pocket.</title>
        <authorList>
            <person name="Zimmerman B."/>
            <person name="Kelly B."/>
            <person name="McMillan B.J."/>
            <person name="Seegar T.C.M."/>
            <person name="Dror R.O."/>
            <person name="Kruse A.C."/>
            <person name="Blacklow S.C."/>
        </authorList>
    </citation>
    <scope>X-RAY CRYSTALLOGRAPHY (2.96 ANGSTROMS)</scope>
    <scope>FUNCTION</scope>
    <scope>TOPOLOGY</scope>
    <scope>DISULFIDE BONDS</scope>
    <scope>CHOLESTEROL BINDING</scope>
    <scope>DOMAIN</scope>
    <scope>MUTAGENESIS OF GLU-219</scope>
</reference>
<reference evidence="37 38 39 40 41" key="33">
    <citation type="journal article" date="2017" name="Structure">
        <title>Mechanism of Structural Tuning of the Hepatitis C Virus Human Cellular Receptor CD81 Large Extracellular Loop.</title>
        <authorList>
            <person name="Cunha E.S."/>
            <person name="Sfriso P."/>
            <person name="Rojas A.L."/>
            <person name="Roversi P."/>
            <person name="Hospital A."/>
            <person name="Orozco M."/>
            <person name="Abrescia N.G.A."/>
        </authorList>
    </citation>
    <scope>X-RAY CRYSTALLOGRAPHY (1.28 ANGSTROMS) OF 113-201</scope>
    <scope>DISULFIDE BONDS</scope>
</reference>
<keyword id="KW-0002">3D-structure</keyword>
<keyword id="KW-1064">Adaptive immunity</keyword>
<keyword id="KW-1003">Cell membrane</keyword>
<keyword id="KW-1015">Disulfide bond</keyword>
<keyword id="KW-1183">Host cell receptor for virus entry</keyword>
<keyword id="KW-0945">Host-virus interaction</keyword>
<keyword id="KW-0391">Immunity</keyword>
<keyword id="KW-0446">Lipid-binding</keyword>
<keyword id="KW-0472">Membrane</keyword>
<keyword id="KW-1267">Proteomics identification</keyword>
<keyword id="KW-0675">Receptor</keyword>
<keyword id="KW-1185">Reference proteome</keyword>
<keyword id="KW-0812">Transmembrane</keyword>
<keyword id="KW-1133">Transmembrane helix</keyword>
<dbReference type="EMBL" id="M33680">
    <property type="protein sequence ID" value="AAA36663.1"/>
    <property type="molecule type" value="mRNA"/>
</dbReference>
<dbReference type="EMBL" id="BT019507">
    <property type="protein sequence ID" value="AAV38314.1"/>
    <property type="molecule type" value="mRNA"/>
</dbReference>
<dbReference type="EMBL" id="BT019508">
    <property type="protein sequence ID" value="AAV38315.1"/>
    <property type="molecule type" value="mRNA"/>
</dbReference>
<dbReference type="EMBL" id="EF064749">
    <property type="protein sequence ID" value="ABK41932.1"/>
    <property type="molecule type" value="Genomic_DNA"/>
</dbReference>
<dbReference type="EMBL" id="AC129929">
    <property type="status" value="NOT_ANNOTATED_CDS"/>
    <property type="molecule type" value="Genomic_DNA"/>
</dbReference>
<dbReference type="EMBL" id="AC124057">
    <property type="status" value="NOT_ANNOTATED_CDS"/>
    <property type="molecule type" value="Genomic_DNA"/>
</dbReference>
<dbReference type="EMBL" id="BC002978">
    <property type="protein sequence ID" value="AAH02978.1"/>
    <property type="molecule type" value="mRNA"/>
</dbReference>
<dbReference type="EMBL" id="BC093047">
    <property type="protein sequence ID" value="AAH93047.1"/>
    <property type="molecule type" value="mRNA"/>
</dbReference>
<dbReference type="CCDS" id="CCDS7734.1"/>
<dbReference type="PIR" id="A35649">
    <property type="entry name" value="A35649"/>
</dbReference>
<dbReference type="RefSeq" id="NP_001284578.1">
    <property type="nucleotide sequence ID" value="NM_001297649.1"/>
</dbReference>
<dbReference type="RefSeq" id="NP_004347.1">
    <property type="nucleotide sequence ID" value="NM_004356.4"/>
</dbReference>
<dbReference type="PDB" id="1G8Q">
    <property type="method" value="X-ray"/>
    <property type="resolution" value="1.60 A"/>
    <property type="chains" value="A/B=113-201"/>
</dbReference>
<dbReference type="PDB" id="1IV5">
    <property type="method" value="X-ray"/>
    <property type="resolution" value="2.60 A"/>
    <property type="chains" value="A/B=113-201"/>
</dbReference>
<dbReference type="PDB" id="3X0E">
    <property type="method" value="X-ray"/>
    <property type="resolution" value="1.84 A"/>
    <property type="chains" value="A/B=113-202"/>
</dbReference>
<dbReference type="PDB" id="5DFV">
    <property type="method" value="X-ray"/>
    <property type="resolution" value="2.80 A"/>
    <property type="chains" value="A/B=112-201"/>
</dbReference>
<dbReference type="PDB" id="5DFW">
    <property type="method" value="X-ray"/>
    <property type="resolution" value="2.33 A"/>
    <property type="chains" value="A=112-201"/>
</dbReference>
<dbReference type="PDB" id="5M2C">
    <property type="method" value="X-ray"/>
    <property type="resolution" value="1.96 A"/>
    <property type="chains" value="A/B=112-201"/>
</dbReference>
<dbReference type="PDB" id="5M33">
    <property type="method" value="X-ray"/>
    <property type="resolution" value="1.28 A"/>
    <property type="chains" value="A/B=113-201"/>
</dbReference>
<dbReference type="PDB" id="5M3D">
    <property type="method" value="X-ray"/>
    <property type="resolution" value="2.38 A"/>
    <property type="chains" value="A/B/C/D=112-201"/>
</dbReference>
<dbReference type="PDB" id="5M3T">
    <property type="method" value="X-ray"/>
    <property type="resolution" value="2.02 A"/>
    <property type="chains" value="A/B=112-201"/>
</dbReference>
<dbReference type="PDB" id="5M4R">
    <property type="method" value="X-ray"/>
    <property type="resolution" value="3.10 A"/>
    <property type="chains" value="A/B/C/D/E=112-201"/>
</dbReference>
<dbReference type="PDB" id="5TCX">
    <property type="method" value="X-ray"/>
    <property type="resolution" value="2.96 A"/>
    <property type="chains" value="A=2-236"/>
</dbReference>
<dbReference type="PDB" id="6EJG">
    <property type="method" value="X-ray"/>
    <property type="resolution" value="2.82 A"/>
    <property type="chains" value="A/B=112-202"/>
</dbReference>
<dbReference type="PDB" id="6EJM">
    <property type="method" value="X-ray"/>
    <property type="resolution" value="2.15 A"/>
    <property type="chains" value="A/B=112-202"/>
</dbReference>
<dbReference type="PDB" id="6EK2">
    <property type="method" value="X-ray"/>
    <property type="resolution" value="2.65 A"/>
    <property type="chains" value="A/B=112-201"/>
</dbReference>
<dbReference type="PDB" id="6U9S">
    <property type="method" value="X-ray"/>
    <property type="resolution" value="2.40 A"/>
    <property type="chains" value="C/F=112-200"/>
</dbReference>
<dbReference type="PDB" id="7JIC">
    <property type="method" value="EM"/>
    <property type="resolution" value="3.80 A"/>
    <property type="chains" value="B=2-236"/>
</dbReference>
<dbReference type="PDBsum" id="1G8Q"/>
<dbReference type="PDBsum" id="1IV5"/>
<dbReference type="PDBsum" id="3X0E"/>
<dbReference type="PDBsum" id="5DFV"/>
<dbReference type="PDBsum" id="5DFW"/>
<dbReference type="PDBsum" id="5M2C"/>
<dbReference type="PDBsum" id="5M33"/>
<dbReference type="PDBsum" id="5M3D"/>
<dbReference type="PDBsum" id="5M3T"/>
<dbReference type="PDBsum" id="5M4R"/>
<dbReference type="PDBsum" id="5TCX"/>
<dbReference type="PDBsum" id="6EJG"/>
<dbReference type="PDBsum" id="6EJM"/>
<dbReference type="PDBsum" id="6EK2"/>
<dbReference type="PDBsum" id="6U9S"/>
<dbReference type="PDBsum" id="7JIC"/>
<dbReference type="BMRB" id="P60033"/>
<dbReference type="EMDB" id="EMD-22344"/>
<dbReference type="SMR" id="P60033"/>
<dbReference type="BioGRID" id="107413">
    <property type="interactions" value="299"/>
</dbReference>
<dbReference type="CORUM" id="P60033"/>
<dbReference type="FunCoup" id="P60033">
    <property type="interactions" value="276"/>
</dbReference>
<dbReference type="IntAct" id="P60033">
    <property type="interactions" value="299"/>
</dbReference>
<dbReference type="MINT" id="P60033"/>
<dbReference type="STRING" id="9606.ENSP00000263645"/>
<dbReference type="BindingDB" id="P60033"/>
<dbReference type="ChEMBL" id="CHEMBL1075180"/>
<dbReference type="TCDB" id="8.A.40.1.1">
    <property type="family name" value="the tetraspanin (tetraspanin) family"/>
</dbReference>
<dbReference type="GlyGen" id="P60033">
    <property type="glycosylation" value="1 site, 1 O-linked glycan (1 site)"/>
</dbReference>
<dbReference type="iPTMnet" id="P60033"/>
<dbReference type="PhosphoSitePlus" id="P60033"/>
<dbReference type="SwissPalm" id="P60033"/>
<dbReference type="BioMuta" id="CD81"/>
<dbReference type="DMDM" id="38503376"/>
<dbReference type="jPOST" id="P60033"/>
<dbReference type="MassIVE" id="P60033"/>
<dbReference type="PaxDb" id="9606-ENSP00000263645"/>
<dbReference type="PeptideAtlas" id="P60033"/>
<dbReference type="ProteomicsDB" id="57182"/>
<dbReference type="Pumba" id="P60033"/>
<dbReference type="ABCD" id="P60033">
    <property type="antibodies" value="10 sequenced antibodies"/>
</dbReference>
<dbReference type="Antibodypedia" id="1570">
    <property type="antibodies" value="1358 antibodies from 46 providers"/>
</dbReference>
<dbReference type="DNASU" id="975"/>
<dbReference type="Ensembl" id="ENST00000263645.10">
    <property type="protein sequence ID" value="ENSP00000263645.5"/>
    <property type="gene ID" value="ENSG00000110651.13"/>
</dbReference>
<dbReference type="GeneID" id="975"/>
<dbReference type="KEGG" id="hsa:975"/>
<dbReference type="MANE-Select" id="ENST00000263645.10">
    <property type="protein sequence ID" value="ENSP00000263645.5"/>
    <property type="RefSeq nucleotide sequence ID" value="NM_004356.4"/>
    <property type="RefSeq protein sequence ID" value="NP_004347.1"/>
</dbReference>
<dbReference type="UCSC" id="uc001lwf.2">
    <property type="organism name" value="human"/>
</dbReference>
<dbReference type="AGR" id="HGNC:1701"/>
<dbReference type="CTD" id="975"/>
<dbReference type="DisGeNET" id="975"/>
<dbReference type="GeneCards" id="CD81"/>
<dbReference type="HGNC" id="HGNC:1701">
    <property type="gene designation" value="CD81"/>
</dbReference>
<dbReference type="HPA" id="ENSG00000110651">
    <property type="expression patterns" value="Low tissue specificity"/>
</dbReference>
<dbReference type="MalaCards" id="CD81"/>
<dbReference type="MIM" id="186845">
    <property type="type" value="gene"/>
</dbReference>
<dbReference type="MIM" id="613496">
    <property type="type" value="phenotype"/>
</dbReference>
<dbReference type="neXtProt" id="NX_P60033"/>
<dbReference type="OpenTargets" id="ENSG00000110651"/>
<dbReference type="Orphanet" id="1572">
    <property type="disease" value="Common variable immunodeficiency"/>
</dbReference>
<dbReference type="PharmGKB" id="PA26240"/>
<dbReference type="VEuPathDB" id="HostDB:ENSG00000110651"/>
<dbReference type="eggNOG" id="KOG3882">
    <property type="taxonomic scope" value="Eukaryota"/>
</dbReference>
<dbReference type="GeneTree" id="ENSGT00940000158805"/>
<dbReference type="HOGENOM" id="CLU_055524_10_0_1"/>
<dbReference type="InParanoid" id="P60033"/>
<dbReference type="OMA" id="HETLSCC"/>
<dbReference type="OrthoDB" id="5870230at2759"/>
<dbReference type="PAN-GO" id="P60033">
    <property type="GO annotations" value="1 GO annotation based on evolutionary models"/>
</dbReference>
<dbReference type="PhylomeDB" id="P60033"/>
<dbReference type="TreeFam" id="TF352895"/>
<dbReference type="PathwayCommons" id="P60033"/>
<dbReference type="Reactome" id="R-HSA-198933">
    <property type="pathway name" value="Immunoregulatory interactions between a Lymphoid and a non-Lymphoid cell"/>
</dbReference>
<dbReference type="Reactome" id="R-HSA-977606">
    <property type="pathway name" value="Regulation of Complement cascade"/>
</dbReference>
<dbReference type="SignaLink" id="P60033"/>
<dbReference type="BioGRID-ORCS" id="975">
    <property type="hits" value="22 hits in 1154 CRISPR screens"/>
</dbReference>
<dbReference type="CD-CODE" id="232F8A39">
    <property type="entry name" value="P-body"/>
</dbReference>
<dbReference type="ChiTaRS" id="CD81">
    <property type="organism name" value="human"/>
</dbReference>
<dbReference type="EvolutionaryTrace" id="P60033"/>
<dbReference type="GeneWiki" id="CD81"/>
<dbReference type="GenomeRNAi" id="975"/>
<dbReference type="Pharos" id="P60033">
    <property type="development level" value="Tchem"/>
</dbReference>
<dbReference type="PRO" id="PR:P60033"/>
<dbReference type="Proteomes" id="UP000005640">
    <property type="component" value="Chromosome 11"/>
</dbReference>
<dbReference type="RNAct" id="P60033">
    <property type="molecule type" value="protein"/>
</dbReference>
<dbReference type="Bgee" id="ENSG00000110651">
    <property type="expression patterns" value="Expressed in stromal cell of endometrium and 213 other cell types or tissues"/>
</dbReference>
<dbReference type="ExpressionAtlas" id="P60033">
    <property type="expression patterns" value="baseline and differential"/>
</dbReference>
<dbReference type="GO" id="GO:0009925">
    <property type="term" value="C:basal plasma membrane"/>
    <property type="evidence" value="ECO:0000314"/>
    <property type="project" value="ARUK-UCL"/>
</dbReference>
<dbReference type="GO" id="GO:0016323">
    <property type="term" value="C:basolateral plasma membrane"/>
    <property type="evidence" value="ECO:0000314"/>
    <property type="project" value="UniProtKB"/>
</dbReference>
<dbReference type="GO" id="GO:0005829">
    <property type="term" value="C:cytosol"/>
    <property type="evidence" value="ECO:0000314"/>
    <property type="project" value="HPA"/>
</dbReference>
<dbReference type="GO" id="GO:0070062">
    <property type="term" value="C:extracellular exosome"/>
    <property type="evidence" value="ECO:0000314"/>
    <property type="project" value="UniProtKB"/>
</dbReference>
<dbReference type="GO" id="GO:0005925">
    <property type="term" value="C:focal adhesion"/>
    <property type="evidence" value="ECO:0007005"/>
    <property type="project" value="UniProtKB"/>
</dbReference>
<dbReference type="GO" id="GO:0001772">
    <property type="term" value="C:immunological synapse"/>
    <property type="evidence" value="ECO:0000314"/>
    <property type="project" value="UniProtKB"/>
</dbReference>
<dbReference type="GO" id="GO:0016020">
    <property type="term" value="C:membrane"/>
    <property type="evidence" value="ECO:0000314"/>
    <property type="project" value="UniProtKB"/>
</dbReference>
<dbReference type="GO" id="GO:0005886">
    <property type="term" value="C:plasma membrane"/>
    <property type="evidence" value="ECO:0000314"/>
    <property type="project" value="UniProtKB"/>
</dbReference>
<dbReference type="GO" id="GO:0097197">
    <property type="term" value="C:tetraspanin-enriched microdomain"/>
    <property type="evidence" value="ECO:0000314"/>
    <property type="project" value="UniProtKB"/>
</dbReference>
<dbReference type="GO" id="GO:0031982">
    <property type="term" value="C:vesicle"/>
    <property type="evidence" value="ECO:0000314"/>
    <property type="project" value="UniProtKB"/>
</dbReference>
<dbReference type="GO" id="GO:0015485">
    <property type="term" value="F:cholesterol binding"/>
    <property type="evidence" value="ECO:0000314"/>
    <property type="project" value="UniProtKB"/>
</dbReference>
<dbReference type="GO" id="GO:0005178">
    <property type="term" value="F:integrin binding"/>
    <property type="evidence" value="ECO:0000314"/>
    <property type="project" value="UniProtKB"/>
</dbReference>
<dbReference type="GO" id="GO:0042289">
    <property type="term" value="F:MHC class II protein binding"/>
    <property type="evidence" value="ECO:0000314"/>
    <property type="project" value="UniProtKB"/>
</dbReference>
<dbReference type="GO" id="GO:0023026">
    <property type="term" value="F:MHC class II protein complex binding"/>
    <property type="evidence" value="ECO:0007005"/>
    <property type="project" value="UniProtKB"/>
</dbReference>
<dbReference type="GO" id="GO:1990459">
    <property type="term" value="F:transferrin receptor binding"/>
    <property type="evidence" value="ECO:0000353"/>
    <property type="project" value="BHF-UCL"/>
</dbReference>
<dbReference type="GO" id="GO:0001618">
    <property type="term" value="F:virus receptor activity"/>
    <property type="evidence" value="ECO:0000315"/>
    <property type="project" value="UniProtKB"/>
</dbReference>
<dbReference type="GO" id="GO:0035783">
    <property type="term" value="P:CD4-positive, alpha-beta T cell costimulation"/>
    <property type="evidence" value="ECO:0000314"/>
    <property type="project" value="UniProtKB"/>
</dbReference>
<dbReference type="GO" id="GO:0071404">
    <property type="term" value="P:cellular response to low-density lipoprotein particle stimulus"/>
    <property type="evidence" value="ECO:0000250"/>
    <property type="project" value="UniProtKB"/>
</dbReference>
<dbReference type="GO" id="GO:0002455">
    <property type="term" value="P:humoral immune response mediated by circulating immunoglobulin"/>
    <property type="evidence" value="ECO:0000315"/>
    <property type="project" value="UniProtKB"/>
</dbReference>
<dbReference type="GO" id="GO:0001771">
    <property type="term" value="P:immunological synapse formation"/>
    <property type="evidence" value="ECO:0000315"/>
    <property type="project" value="UniProtKB"/>
</dbReference>
<dbReference type="GO" id="GO:0034238">
    <property type="term" value="P:macrophage fusion"/>
    <property type="evidence" value="ECO:0000314"/>
    <property type="project" value="UniProtKB"/>
</dbReference>
<dbReference type="GO" id="GO:0014905">
    <property type="term" value="P:myoblast fusion involved in skeletal muscle regeneration"/>
    <property type="evidence" value="ECO:0000250"/>
    <property type="project" value="UniProtKB"/>
</dbReference>
<dbReference type="GO" id="GO:0072675">
    <property type="term" value="P:osteoclast fusion"/>
    <property type="evidence" value="ECO:0000250"/>
    <property type="project" value="UniProtKB"/>
</dbReference>
<dbReference type="GO" id="GO:1905676">
    <property type="term" value="P:positive regulation of adaptive immune memory response"/>
    <property type="evidence" value="ECO:0000315"/>
    <property type="project" value="UniProtKB"/>
</dbReference>
<dbReference type="GO" id="GO:0030890">
    <property type="term" value="P:positive regulation of B cell proliferation"/>
    <property type="evidence" value="ECO:0000314"/>
    <property type="project" value="AgBase"/>
</dbReference>
<dbReference type="GO" id="GO:0050861">
    <property type="term" value="P:positive regulation of B cell receptor signaling pathway"/>
    <property type="evidence" value="ECO:0000315"/>
    <property type="project" value="UniProtKB"/>
</dbReference>
<dbReference type="GO" id="GO:2000563">
    <property type="term" value="P:positive regulation of CD4-positive, alpha-beta T cell proliferation"/>
    <property type="evidence" value="ECO:0000314"/>
    <property type="project" value="UniProtKB"/>
</dbReference>
<dbReference type="GO" id="GO:0002863">
    <property type="term" value="P:positive regulation of inflammatory response to antigenic stimulus"/>
    <property type="evidence" value="ECO:0000250"/>
    <property type="project" value="UniProtKB"/>
</dbReference>
<dbReference type="GO" id="GO:0043410">
    <property type="term" value="P:positive regulation of MAPK cascade"/>
    <property type="evidence" value="ECO:0000314"/>
    <property type="project" value="UniProtKB"/>
</dbReference>
<dbReference type="GO" id="GO:1904352">
    <property type="term" value="P:positive regulation of protein catabolic process in the vacuole"/>
    <property type="evidence" value="ECO:0000315"/>
    <property type="project" value="BHF-UCL"/>
</dbReference>
<dbReference type="GO" id="GO:0070863">
    <property type="term" value="P:positive regulation of protein exit from endoplasmic reticulum"/>
    <property type="evidence" value="ECO:0000315"/>
    <property type="project" value="UniProtKB"/>
</dbReference>
<dbReference type="GO" id="GO:1903911">
    <property type="term" value="P:positive regulation of receptor clustering"/>
    <property type="evidence" value="ECO:0000314"/>
    <property type="project" value="UniProtKB"/>
</dbReference>
<dbReference type="GO" id="GO:2001190">
    <property type="term" value="P:positive regulation of T cell activation via T cell receptor contact with antigen bound to MHC molecule on antigen presenting cell"/>
    <property type="evidence" value="ECO:0000314"/>
    <property type="project" value="UniProtKB"/>
</dbReference>
<dbReference type="GO" id="GO:0050862">
    <property type="term" value="P:positive regulation of T cell receptor signaling pathway"/>
    <property type="evidence" value="ECO:0000315"/>
    <property type="project" value="UniProtKB"/>
</dbReference>
<dbReference type="GO" id="GO:2000553">
    <property type="term" value="P:positive regulation of T-helper 2 cell cytokine production"/>
    <property type="evidence" value="ECO:0000314"/>
    <property type="project" value="UniProtKB"/>
</dbReference>
<dbReference type="GO" id="GO:0045944">
    <property type="term" value="P:positive regulation of transcription by RNA polymerase II"/>
    <property type="evidence" value="ECO:0000316"/>
    <property type="project" value="BHF-UCL"/>
</dbReference>
<dbReference type="GO" id="GO:0061462">
    <property type="term" value="P:protein localization to lysosome"/>
    <property type="evidence" value="ECO:0000315"/>
    <property type="project" value="BHF-UCL"/>
</dbReference>
<dbReference type="GO" id="GO:0072659">
    <property type="term" value="P:protein localization to plasma membrane"/>
    <property type="evidence" value="ECO:0000314"/>
    <property type="project" value="UniProtKB"/>
</dbReference>
<dbReference type="GO" id="GO:0031623">
    <property type="term" value="P:receptor internalization"/>
    <property type="evidence" value="ECO:0000250"/>
    <property type="project" value="UniProtKB"/>
</dbReference>
<dbReference type="GO" id="GO:1905521">
    <property type="term" value="P:regulation of macrophage migration"/>
    <property type="evidence" value="ECO:0000250"/>
    <property type="project" value="UniProtKB"/>
</dbReference>
<dbReference type="GO" id="GO:0031647">
    <property type="term" value="P:regulation of protein stability"/>
    <property type="evidence" value="ECO:0000315"/>
    <property type="project" value="BHF-UCL"/>
</dbReference>
<dbReference type="CDD" id="cd03151">
    <property type="entry name" value="CD81_like_LEL"/>
    <property type="match status" value="1"/>
</dbReference>
<dbReference type="FunFam" id="1.10.1450.10:FF:000010">
    <property type="entry name" value="Tetraspanin"/>
    <property type="match status" value="1"/>
</dbReference>
<dbReference type="Gene3D" id="1.10.1450.10">
    <property type="entry name" value="Tetraspanin"/>
    <property type="match status" value="1"/>
</dbReference>
<dbReference type="InterPro" id="IPR018499">
    <property type="entry name" value="Tetraspanin/Peripherin"/>
</dbReference>
<dbReference type="InterPro" id="IPR000301">
    <property type="entry name" value="Tetraspanin_animals"/>
</dbReference>
<dbReference type="InterPro" id="IPR018503">
    <property type="entry name" value="Tetraspanin_CS"/>
</dbReference>
<dbReference type="InterPro" id="IPR008952">
    <property type="entry name" value="Tetraspanin_EC2_sf"/>
</dbReference>
<dbReference type="PANTHER" id="PTHR19282:SF214">
    <property type="entry name" value="CD81 ANTIGEN"/>
    <property type="match status" value="1"/>
</dbReference>
<dbReference type="PANTHER" id="PTHR19282">
    <property type="entry name" value="TETRASPANIN"/>
    <property type="match status" value="1"/>
</dbReference>
<dbReference type="Pfam" id="PF00335">
    <property type="entry name" value="Tetraspanin"/>
    <property type="match status" value="1"/>
</dbReference>
<dbReference type="PIRSF" id="PIRSF002419">
    <property type="entry name" value="Tetraspanin"/>
    <property type="match status" value="1"/>
</dbReference>
<dbReference type="PRINTS" id="PR00259">
    <property type="entry name" value="TMFOUR"/>
</dbReference>
<dbReference type="SUPFAM" id="SSF48652">
    <property type="entry name" value="Tetraspanin"/>
    <property type="match status" value="1"/>
</dbReference>
<dbReference type="PROSITE" id="PS00421">
    <property type="entry name" value="TM4_1"/>
    <property type="match status" value="1"/>
</dbReference>
<comment type="function">
    <text evidence="1 6 10 11 13 16 17 21 24 25 26">Structural component of specialized membrane microdomains known as tetraspanin-enriched microdomains (TERMs), which act as platforms for receptor clustering and signaling. Essential for trafficking and compartmentalization of CD19 receptor on the surface of activated B cells (PubMed:16449649, PubMed:20237408, PubMed:27881302). Upon initial encounter with microbial pathogens, enables the assembly of CD19-CR2/CD21 and B cell receptor (BCR) complexes at signaling TERMs, lowering the threshold dose of antigen required to trigger B cell clonal expansion and antibody production (PubMed:15161911, PubMed:20237408). In T cells, facilitates the localization of CD247/CD3 zeta at antigen-induced synapses with B cells, providing for costimulation and polarization toward T helper type 2 phenotype (PubMed:22307619, PubMed:23858057, PubMed:8766544). Present in MHC class II compartments, may also play a role in antigen presentation (PubMed:8409388, PubMed:8766544). Can act both as positive and negative regulator of homotypic or heterotypic cell-cell fusion processes. Positively regulates sperm-egg fusion and may be involved in acrosome reaction (By similarity). In myoblasts, associates with CD9 and PTGFRN and inhibits myotube fusion during muscle regeneration (By similarity). In macrophages, associates with CD9 and beta-1 and beta-2 integrins, and prevents macrophage fusion into multinucleated giant cells specialized in ingesting complement-opsonized large particles (PubMed:12796480). Also prevents the fusion of mononuclear cell progenitors into osteoclasts in charge of bone resorption (By similarity). May regulate the compartmentalization of enzymatic activities. In T cells, defines the subcellular localization of dNTPase SAMHD1 and permits its degradation by the proteasome, thereby controlling intracellular dNTP levels (PubMed:28871089). Also involved in cell adhesion and motility. Positively regulates integrin-mediated adhesion of macrophages, particularly relevant for the inflammatory response in the lung (By similarity).</text>
</comment>
<comment type="function">
    <text evidence="14 15 19 20">(Microbial infection) Acts as a receptor for hepatitis C virus (HCV) in hepatocytes. Association with CLDN1 and the CLDN1-CD81 receptor complex is essential for HCV entry into host cell.</text>
</comment>
<comment type="function">
    <text evidence="24">(Microbial infection) Involved in SAMHD1-dependent restriction of HIV-1 replication. May support early replication of both R5- and X4-tropic HIV-1 viruses in T cells, likely via proteasome-dependent degradation of SAMHD1.</text>
</comment>
<comment type="function">
    <text evidence="5">(Microbial infection) Specifically required for Plasmodium falciparum infectivity of hepatocytes, controlling sporozoite entry into hepatocytes via the parasitophorous vacuole and subsequent parasite differentiation to exoerythrocytic forms.</text>
</comment>
<comment type="subunit">
    <text evidence="1 6 9 11 14 17 18 20 24 25">Homodimer (PubMed:20375010). Part of a complex composed of CD19, CR2/CD21, CD81 and IFITM1/CD225 in the membrane of mature B cells. Interacts (via the second extracellular domain) with CD19; this interaction is initiated early during biosynthesis in the ER and enables trafficking of only properly folded CD19 (PubMed:1383329, PubMed:16449649). Part of a complex that includes MHC class II/HLA-DR molecules and IFITM1 (PubMed:8409388). Interacts with IFITM1 (PubMed:2398277, PubMed:26354436). Interacts with IFITM2 and IFITM3 (By similarity). Part of integrin-tetraspanin complex composed of CD9, CD81, beta-1 and beta-2 integrins in the membrane of monocyte/macrophages (PubMed:12796480). Interacts (via the second extracellular domain) with integrin ITGAV:ITGB3 (PubMed:27993971). Interacts with CD247/CD3 zeta, ICAM1 and CD9 at the immune synapse on T cell membrane (PubMed:23858057). Part of a GPCR-tetraspanin complex consisting at least of ADGRG1, CD81, possibly CD9, and GNA11 in which CD81 enhances the association of ADGRG1 with GNA11 (PubMed:15004227). Part of a complex composed of CD9, CD81, PTGFRN and IGSF8 (By similarity). Interacts directly with IGSF8 (PubMed:11504738). Interacts with CD53 and SCIMP (PubMed:21930792). Interacts with SAMHD1 (via its C-terminus) (PubMed:28871089). Interacts with glypican GPC3 and with the transcriptional repressor HHEX; binding to GPC3 decreases the availability of free CD81 for binding to HHEX, resulting in nuclear translocation of HHEX and transcriptional repression (By similarity). Interacts with CLDN1 (PubMed:20375010, PubMed:21516087). Interacts with CLDN6 and CLDN9 (PubMed:20375010).</text>
</comment>
<comment type="subunit">
    <text evidence="7 8 19">(Microbial infection) Plays a critical role in HCV attachment and/or cell entry by interacting with HCV E1/E2 glycoproteins heterodimer.</text>
</comment>
<comment type="interaction">
    <interactant intactId="EBI-712921">
        <id>P60033</id>
    </interactant>
    <interactant intactId="EBI-1536151">
        <id>O14672</id>
        <label>ADAM10</label>
    </interactant>
    <organismsDiffer>false</organismsDiffer>
    <experiments>9</experiments>
</comment>
<comment type="interaction">
    <interactant intactId="EBI-712921">
        <id>P60033</id>
    </interactant>
    <interactant intactId="EBI-21222747">
        <id>PRO_0000029067</id>
        <label>ADAM10</label>
        <dbReference type="UniProtKB" id="O14672"/>
    </interactant>
    <organismsDiffer>false</organismsDiffer>
    <experiments>2</experiments>
</comment>
<comment type="interaction">
    <interactant intactId="EBI-712921">
        <id>P60033</id>
    </interactant>
    <interactant intactId="EBI-13059134">
        <id>Q13520</id>
        <label>AQP6</label>
    </interactant>
    <organismsDiffer>false</organismsDiffer>
    <experiments>3</experiments>
</comment>
<comment type="interaction">
    <interactant intactId="EBI-712921">
        <id>P60033</id>
    </interactant>
    <interactant intactId="EBI-2476339">
        <id>Q10589</id>
        <label>BST2</label>
    </interactant>
    <organismsDiffer>false</organismsDiffer>
    <experiments>3</experiments>
</comment>
<comment type="interaction">
    <interactant intactId="EBI-712921">
        <id>P60033</id>
    </interactant>
    <interactant intactId="EBI-18013275">
        <id>Q7Z7G2</id>
        <label>CPLX4</label>
    </interactant>
    <organismsDiffer>false</organismsDiffer>
    <experiments>3</experiments>
</comment>
<comment type="interaction">
    <interactant intactId="EBI-712921">
        <id>P60033</id>
    </interactant>
    <interactant intactId="EBI-3915253">
        <id>Q15125</id>
        <label>EBP</label>
    </interactant>
    <organismsDiffer>false</organismsDiffer>
    <experiments>3</experiments>
</comment>
<comment type="interaction">
    <interactant intactId="EBI-712921">
        <id>P60033</id>
    </interactant>
    <interactant intactId="EBI-781551">
        <id>Q9Y282</id>
        <label>ERGIC3</label>
    </interactant>
    <organismsDiffer>false</organismsDiffer>
    <experiments>3</experiments>
</comment>
<comment type="interaction">
    <interactant intactId="EBI-712921">
        <id>P60033</id>
    </interactant>
    <interactant intactId="EBI-18304435">
        <id>Q5JX71</id>
        <label>FAM209A</label>
    </interactant>
    <organismsDiffer>false</organismsDiffer>
    <experiments>3</experiments>
</comment>
<comment type="interaction">
    <interactant intactId="EBI-712921">
        <id>P60033</id>
    </interactant>
    <interactant intactId="EBI-6918707">
        <id>P35212</id>
        <label>GJA4</label>
    </interactant>
    <organismsDiffer>false</organismsDiffer>
    <experiments>3</experiments>
</comment>
<comment type="interaction">
    <interactant intactId="EBI-712921">
        <id>P60033</id>
    </interactant>
    <interactant intactId="EBI-3917143">
        <id>Q5T7V8</id>
        <label>GORAB</label>
    </interactant>
    <organismsDiffer>false</organismsDiffer>
    <experiments>3</experiments>
</comment>
<comment type="interaction">
    <interactant intactId="EBI-712921">
        <id>P60033</id>
    </interactant>
    <interactant intactId="EBI-13345167">
        <id>Q8TDT2</id>
        <label>GPR152</label>
    </interactant>
    <organismsDiffer>false</organismsDiffer>
    <experiments>3</experiments>
</comment>
<comment type="interaction">
    <interactant intactId="EBI-712921">
        <id>P60033</id>
    </interactant>
    <interactant intactId="EBI-11721746">
        <id>Q8TED1</id>
        <label>GPX8</label>
    </interactant>
    <organismsDiffer>false</organismsDiffer>
    <experiments>3</experiments>
</comment>
<comment type="interaction">
    <interactant intactId="EBI-712921">
        <id>P60033</id>
    </interactant>
    <interactant intactId="EBI-1055147">
        <id>Q14739</id>
        <label>LBR</label>
    </interactant>
    <organismsDiffer>false</organismsDiffer>
    <experiments>3</experiments>
</comment>
<comment type="interaction">
    <interactant intactId="EBI-712921">
        <id>P60033</id>
    </interactant>
    <interactant intactId="EBI-2820517">
        <id>Q8TAF8</id>
        <label>LHFPL5</label>
    </interactant>
    <organismsDiffer>false</organismsDiffer>
    <experiments>3</experiments>
</comment>
<comment type="interaction">
    <interactant intactId="EBI-712921">
        <id>P60033</id>
    </interactant>
    <interactant intactId="EBI-10292326">
        <id>Q96PE7</id>
        <label>MCEE</label>
    </interactant>
    <organismsDiffer>false</organismsDiffer>
    <experiments>3</experiments>
</comment>
<comment type="interaction">
    <interactant intactId="EBI-712921">
        <id>P60033</id>
    </interactant>
    <interactant intactId="EBI-750085">
        <id>Q9Y676</id>
        <label>MRPS18B</label>
    </interactant>
    <organismsDiffer>false</organismsDiffer>
    <experiments>3</experiments>
</comment>
<comment type="interaction">
    <interactant intactId="EBI-712921">
        <id>P60033</id>
    </interactant>
    <interactant intactId="EBI-10969203">
        <id>O14524-2</id>
        <label>NEMP1</label>
    </interactant>
    <organismsDiffer>false</organismsDiffer>
    <experiments>3</experiments>
</comment>
<comment type="interaction">
    <interactant intactId="EBI-712921">
        <id>P60033</id>
    </interactant>
    <interactant intactId="EBI-716063">
        <id>Q13113</id>
        <label>PDZK1IP1</label>
    </interactant>
    <organismsDiffer>false</organismsDiffer>
    <experiments>3</experiments>
</comment>
<comment type="interaction">
    <interactant intactId="EBI-712921">
        <id>P60033</id>
    </interactant>
    <interactant intactId="EBI-3920694">
        <id>Q9NR31</id>
        <label>SAR1A</label>
    </interactant>
    <organismsDiffer>false</organismsDiffer>
    <experiments>3</experiments>
</comment>
<comment type="interaction">
    <interactant intactId="EBI-712921">
        <id>P60033</id>
    </interactant>
    <interactant intactId="EBI-78657">
        <id>Q8WTV0</id>
        <label>SCARB1</label>
    </interactant>
    <organismsDiffer>false</organismsDiffer>
    <experiments>4</experiments>
</comment>
<comment type="interaction">
    <interactant intactId="EBI-712921">
        <id>P60033</id>
    </interactant>
    <interactant intactId="EBI-16769525">
        <id>Q5VUM1</id>
        <label>SDHAF4</label>
    </interactant>
    <organismsDiffer>false</organismsDiffer>
    <experiments>3</experiments>
</comment>
<comment type="interaction">
    <interactant intactId="EBI-712921">
        <id>P60033</id>
    </interactant>
    <interactant intactId="EBI-12814225">
        <id>Q9BXS9-3</id>
        <label>SLC26A6</label>
    </interactant>
    <organismsDiffer>false</organismsDiffer>
    <experiments>3</experiments>
</comment>
<comment type="interaction">
    <interactant intactId="EBI-712921">
        <id>P60033</id>
    </interactant>
    <interactant intactId="EBI-712466">
        <id>Q16623</id>
        <label>STX1A</label>
    </interactant>
    <organismsDiffer>false</organismsDiffer>
    <experiments>3</experiments>
</comment>
<comment type="interaction">
    <interactant intactId="EBI-712921">
        <id>P60033</id>
    </interactant>
    <interactant intactId="EBI-726691">
        <id>Q8WY91</id>
        <label>THAP4</label>
    </interactant>
    <organismsDiffer>false</organismsDiffer>
    <experiments>3</experiments>
</comment>
<comment type="interaction">
    <interactant intactId="EBI-712921">
        <id>P60033</id>
    </interactant>
    <interactant intactId="EBI-6447886">
        <id>Q9Y320</id>
        <label>TMX2</label>
    </interactant>
    <organismsDiffer>false</organismsDiffer>
    <experiments>3</experiments>
</comment>
<comment type="interaction">
    <interactant intactId="EBI-712921">
        <id>P60033</id>
    </interactant>
    <interactant intactId="EBI-16746122">
        <id>Q9NSU2-1</id>
        <label>TREX1</label>
    </interactant>
    <organismsDiffer>false</organismsDiffer>
    <experiments>3</experiments>
</comment>
<comment type="interaction">
    <interactant intactId="EBI-712921">
        <id>P60033</id>
    </interactant>
    <interactant intactId="EBI-6904269">
        <id>PRO_0000037570</id>
        <dbReference type="UniProtKB" id="P27958"/>
    </interactant>
    <organismsDiffer>true</organismsDiffer>
    <experiments>11</experiments>
</comment>
<comment type="interaction">
    <interactant intactId="EBI-712921">
        <id>P60033</id>
    </interactant>
    <interactant intactId="EBI-6901449">
        <id>PRO_0000045596</id>
        <dbReference type="UniProtKB" id="Q99IB8"/>
    </interactant>
    <organismsDiffer>true</organismsDiffer>
    <experiments>2</experiments>
</comment>
<comment type="subcellular location">
    <subcellularLocation>
        <location evidence="9 12 13 16 18 20">Cell membrane</location>
        <topology evidence="2">Multi-pass membrane protein</topology>
    </subcellularLocation>
    <subcellularLocation>
        <location evidence="14">Basolateral cell membrane</location>
        <topology evidence="2">Multi-pass membrane protein</topology>
    </subcellularLocation>
    <text evidence="14">Associates with CLDN1 and the CLDN1-CD81 complex localizes to the basolateral cell membrane.</text>
</comment>
<comment type="tissue specificity">
    <text evidence="5 6 13 16">Expressed on B cells (at protein level) (PubMed:20237408). Expressed in hepatocytes (at protein level) (PubMed:12483205). Expressed in monocytes/macrophages (at protein level) (PubMed:12796480). Expressed on both naive and memory CD4-positive T cells (at protein level) (PubMed:22307619).</text>
</comment>
<comment type="domain">
    <text evidence="21">Binds cholesterol in a cavity lined by the transmembrane spans.</text>
</comment>
<comment type="PTM">
    <text evidence="29">Not glycosylated.</text>
</comment>
<comment type="PTM">
    <text evidence="10">Likely constitutively palmitoylated at low levels. Protein palmitoylation is up-regulated upon coligation of BCR and CD9-C2R-CD81 complexes in lipid rafts.</text>
</comment>
<comment type="disease" evidence="13">
    <disease id="DI-02803">
        <name>Immunodeficiency, common variable, 6</name>
        <acronym>CVID6</acronym>
        <description>A primary immunodeficiency characterized by antibody deficiency, hypogammaglobulinemia, recurrent bacterial infections and an inability to mount an antibody response to antigen. The defect results from a failure of B-cell differentiation and impaired secretion of immunoglobulins; the numbers of circulating B-cells is usually in the normal range, but can be low.</description>
        <dbReference type="MIM" id="613496"/>
    </disease>
    <text>The disease is caused by variants affecting the gene represented in this entry.</text>
</comment>
<comment type="similarity">
    <text evidence="29">Belongs to the tetraspanin (TM4SF) family.</text>
</comment>
<sequence length="236" mass="25809">MGVEGCTKCIKYLLFVFNFVFWLAGGVILGVALWLRHDPQTTNLLYLELGDKPAPNTFYVGIYILIAVGAVMMFVGFLGCYGAIQESQCLLGTFFTCLVILFACEVAAGIWGFVNKDQIAKDVKQFYDQALQQAVVDDDANNAKAVVKTFHETLDCCGSSTLTALTTSVLKNNLCPSGSNIISNLFKEDCHQKIDDLFSGKLYLIGIAAIVVAVIMIFEMILSMVLCCGIRNSSVY</sequence>
<protein>
    <recommendedName>
        <fullName>CD81 antigen</fullName>
    </recommendedName>
    <alternativeName>
        <fullName evidence="27">26 kDa cell surface protein TAPA-1</fullName>
    </alternativeName>
    <alternativeName>
        <fullName evidence="27">Target of the antiproliferative antibody 1</fullName>
    </alternativeName>
    <alternativeName>
        <fullName>Tetraspanin-28</fullName>
        <shortName>Tspan-28</shortName>
    </alternativeName>
    <cdAntigenName evidence="28">CD81</cdAntigenName>
</protein>
<organism>
    <name type="scientific">Homo sapiens</name>
    <name type="common">Human</name>
    <dbReference type="NCBI Taxonomy" id="9606"/>
    <lineage>
        <taxon>Eukaryota</taxon>
        <taxon>Metazoa</taxon>
        <taxon>Chordata</taxon>
        <taxon>Craniata</taxon>
        <taxon>Vertebrata</taxon>
        <taxon>Euteleostomi</taxon>
        <taxon>Mammalia</taxon>
        <taxon>Eutheria</taxon>
        <taxon>Euarchontoglires</taxon>
        <taxon>Primates</taxon>
        <taxon>Haplorrhini</taxon>
        <taxon>Catarrhini</taxon>
        <taxon>Hominidae</taxon>
        <taxon>Homo</taxon>
    </lineage>
</organism>
<name>CD81_HUMAN</name>